<sequence>MAFRGWRPPPPPLLLLLLWVTGQAAPVAGLGSDAELQIERRFVPDECPRTVRSGDFVRYHYVGTFPDGQKFDSSYDRDSTFNVFVGKGQLITGMDQALVGMCVNERRFVKIPPKLAYGNEGVSGVIPPNSVLHFDVLLMDIWNSEDQVQIHTYFKPPSCPRTIQVSDFVRYHYNGTFLDGTLFDSSHNRMKTYDTYVGIGWLIPGMDKGLLGMCVGEKRIITIPPFLAYGEDGDGKDIPGQASLVFDVALLDLHNPKDSISIENKVVPENCERISQSGDFLRYHYNGTLLDGTLFDSSYSRNRTFDTYIGQGYVIPGMDEGLLGVCIGEKRRIVVPPHLGYGEEGRGNIPGSAVLVFDIHVIDFHNPSDSISITSHYKPPDCSVLSKKGDYLKYHYNASLLDGTLLDSTWNLGKTYNIVLGSGQVVLGMDMGLREMCVGEKRTVIIPPHLGYGEAGVDGEVPGSAVLVFDIELLELVAGLPEGYMFIWNGEVSPNLFEEIDKDGNGEVLLEEFSEYIHAQVASGKGKLAPGFDAELIVKNMFTNQDRNGDGKVTAEEFKLKDQEAKHDEL</sequence>
<keyword id="KW-0025">Alternative splicing</keyword>
<keyword id="KW-0106">Calcium</keyword>
<keyword id="KW-0256">Endoplasmic reticulum</keyword>
<keyword id="KW-0325">Glycoprotein</keyword>
<keyword id="KW-0413">Isomerase</keyword>
<keyword id="KW-0479">Metal-binding</keyword>
<keyword id="KW-0597">Phosphoprotein</keyword>
<keyword id="KW-1267">Proteomics identification</keyword>
<keyword id="KW-1185">Reference proteome</keyword>
<keyword id="KW-0677">Repeat</keyword>
<keyword id="KW-0697">Rotamase</keyword>
<keyword id="KW-0732">Signal</keyword>
<comment type="function">
    <text>PPIases accelerate the folding of proteins during protein synthesis.</text>
</comment>
<comment type="catalytic activity">
    <reaction>
        <text>[protein]-peptidylproline (omega=180) = [protein]-peptidylproline (omega=0)</text>
        <dbReference type="Rhea" id="RHEA:16237"/>
        <dbReference type="Rhea" id="RHEA-COMP:10747"/>
        <dbReference type="Rhea" id="RHEA-COMP:10748"/>
        <dbReference type="ChEBI" id="CHEBI:83833"/>
        <dbReference type="ChEBI" id="CHEBI:83834"/>
        <dbReference type="EC" id="5.2.1.8"/>
    </reaction>
</comment>
<comment type="activity regulation">
    <text evidence="1">Inhibited by FK506.</text>
</comment>
<comment type="subcellular location">
    <subcellularLocation>
        <location evidence="5">Endoplasmic reticulum</location>
    </subcellularLocation>
</comment>
<comment type="alternative products">
    <event type="alternative splicing"/>
    <isoform>
        <id>O95302-1</id>
        <name>1</name>
        <sequence type="displayed"/>
    </isoform>
    <isoform>
        <id>O95302-2</id>
        <name>2</name>
        <sequence type="described" ref="VSP_054825"/>
    </isoform>
    <isoform>
        <id>O95302-3</id>
        <name>3</name>
        <sequence type="described" ref="VSP_054826"/>
    </isoform>
</comment>
<comment type="PTM">
    <text evidence="1">Phosphorylated.</text>
</comment>
<accession>O95302</accession>
<accession>B3KY35</accession>
<accession>B7Z1G9</accession>
<accession>B7Z6H3</accession>
<accession>Q2M2A1</accession>
<accession>Q3MIR7</accession>
<accession>Q6IN76</accession>
<accession>Q6P2N1</accession>
<accession>Q96EX5</accession>
<accession>Q96IJ9</accession>
<protein>
    <recommendedName>
        <fullName>Peptidyl-prolyl cis-trans isomerase FKBP9</fullName>
        <shortName>PPIase FKBP9</shortName>
        <ecNumber>5.2.1.8</ecNumber>
    </recommendedName>
    <alternativeName>
        <fullName>63 kDa FK506-binding protein</fullName>
        <shortName>63 kDa FKBP</shortName>
        <shortName>FKBP-63</shortName>
    </alternativeName>
    <alternativeName>
        <fullName>FK506-binding protein 9</fullName>
        <shortName>FKBP-9</shortName>
    </alternativeName>
    <alternativeName>
        <fullName>Rotamase</fullName>
    </alternativeName>
</protein>
<evidence type="ECO:0000250" key="1"/>
<evidence type="ECO:0000255" key="2"/>
<evidence type="ECO:0000255" key="3">
    <source>
        <dbReference type="PROSITE-ProRule" id="PRU00277"/>
    </source>
</evidence>
<evidence type="ECO:0000255" key="4">
    <source>
        <dbReference type="PROSITE-ProRule" id="PRU00448"/>
    </source>
</evidence>
<evidence type="ECO:0000255" key="5">
    <source>
        <dbReference type="PROSITE-ProRule" id="PRU10138"/>
    </source>
</evidence>
<evidence type="ECO:0000269" key="6">
    <source>
    </source>
</evidence>
<evidence type="ECO:0000303" key="7">
    <source>
    </source>
</evidence>
<evidence type="ECO:0000305" key="8"/>
<name>FKBP9_HUMAN</name>
<proteinExistence type="evidence at protein level"/>
<organism>
    <name type="scientific">Homo sapiens</name>
    <name type="common">Human</name>
    <dbReference type="NCBI Taxonomy" id="9606"/>
    <lineage>
        <taxon>Eukaryota</taxon>
        <taxon>Metazoa</taxon>
        <taxon>Chordata</taxon>
        <taxon>Craniata</taxon>
        <taxon>Vertebrata</taxon>
        <taxon>Euteleostomi</taxon>
        <taxon>Mammalia</taxon>
        <taxon>Eutheria</taxon>
        <taxon>Euarchontoglires</taxon>
        <taxon>Primates</taxon>
        <taxon>Haplorrhini</taxon>
        <taxon>Catarrhini</taxon>
        <taxon>Hominidae</taxon>
        <taxon>Homo</taxon>
    </lineage>
</organism>
<gene>
    <name type="primary">FKBP9</name>
    <name type="synonym">FKBP60</name>
    <name type="synonym">FKBP63</name>
</gene>
<feature type="signal peptide" evidence="2">
    <location>
        <begin position="1"/>
        <end position="24"/>
    </location>
</feature>
<feature type="chain" id="PRO_0000045760" description="Peptidyl-prolyl cis-trans isomerase FKBP9">
    <location>
        <begin position="25"/>
        <end position="570"/>
    </location>
</feature>
<feature type="domain" description="PPIase FKBP-type 1" evidence="3">
    <location>
        <begin position="54"/>
        <end position="142"/>
    </location>
</feature>
<feature type="domain" description="PPIase FKBP-type 2" evidence="3">
    <location>
        <begin position="166"/>
        <end position="254"/>
    </location>
</feature>
<feature type="domain" description="PPIase FKBP-type 3" evidence="3">
    <location>
        <begin position="278"/>
        <end position="365"/>
    </location>
</feature>
<feature type="domain" description="PPIase FKBP-type 4" evidence="3">
    <location>
        <begin position="389"/>
        <end position="477"/>
    </location>
</feature>
<feature type="domain" description="EF-hand 1" evidence="4">
    <location>
        <begin position="488"/>
        <end position="523"/>
    </location>
</feature>
<feature type="domain" description="EF-hand 2" evidence="4">
    <location>
        <begin position="533"/>
        <end position="568"/>
    </location>
</feature>
<feature type="short sequence motif" description="Prevents secretion from ER" evidence="5">
    <location>
        <begin position="567"/>
        <end position="570"/>
    </location>
</feature>
<feature type="binding site" evidence="8">
    <location>
        <position position="501"/>
    </location>
    <ligand>
        <name>Ca(2+)</name>
        <dbReference type="ChEBI" id="CHEBI:29108"/>
        <label>1</label>
    </ligand>
</feature>
<feature type="binding site" evidence="8">
    <location>
        <position position="503"/>
    </location>
    <ligand>
        <name>Ca(2+)</name>
        <dbReference type="ChEBI" id="CHEBI:29108"/>
        <label>1</label>
    </ligand>
</feature>
<feature type="binding site" evidence="8">
    <location>
        <position position="505"/>
    </location>
    <ligand>
        <name>Ca(2+)</name>
        <dbReference type="ChEBI" id="CHEBI:29108"/>
        <label>1</label>
    </ligand>
</feature>
<feature type="binding site" evidence="8">
    <location>
        <position position="507"/>
    </location>
    <ligand>
        <name>Ca(2+)</name>
        <dbReference type="ChEBI" id="CHEBI:29108"/>
        <label>1</label>
    </ligand>
</feature>
<feature type="binding site" evidence="8">
    <location>
        <position position="512"/>
    </location>
    <ligand>
        <name>Ca(2+)</name>
        <dbReference type="ChEBI" id="CHEBI:29108"/>
        <label>1</label>
    </ligand>
</feature>
<feature type="binding site" evidence="4">
    <location>
        <position position="546"/>
    </location>
    <ligand>
        <name>Ca(2+)</name>
        <dbReference type="ChEBI" id="CHEBI:29108"/>
        <label>2</label>
    </ligand>
</feature>
<feature type="binding site" evidence="4">
    <location>
        <position position="548"/>
    </location>
    <ligand>
        <name>Ca(2+)</name>
        <dbReference type="ChEBI" id="CHEBI:29108"/>
        <label>2</label>
    </ligand>
</feature>
<feature type="binding site" evidence="4">
    <location>
        <position position="550"/>
    </location>
    <ligand>
        <name>Ca(2+)</name>
        <dbReference type="ChEBI" id="CHEBI:29108"/>
        <label>2</label>
    </ligand>
</feature>
<feature type="binding site" evidence="4">
    <location>
        <position position="552"/>
    </location>
    <ligand>
        <name>Ca(2+)</name>
        <dbReference type="ChEBI" id="CHEBI:29108"/>
        <label>2</label>
    </ligand>
</feature>
<feature type="binding site" evidence="4">
    <location>
        <position position="557"/>
    </location>
    <ligand>
        <name>Ca(2+)</name>
        <dbReference type="ChEBI" id="CHEBI:29108"/>
        <label>2</label>
    </ligand>
</feature>
<feature type="glycosylation site" description="N-linked (GlcNAc...) asparagine" evidence="6">
    <location>
        <position position="174"/>
    </location>
</feature>
<feature type="glycosylation site" description="N-linked (GlcNAc...) asparagine" evidence="6">
    <location>
        <position position="286"/>
    </location>
</feature>
<feature type="glycosylation site" description="N-linked (GlcNAc...) asparagine" evidence="2">
    <location>
        <position position="302"/>
    </location>
</feature>
<feature type="glycosylation site" description="N-linked (GlcNAc...) asparagine" evidence="6">
    <location>
        <position position="397"/>
    </location>
</feature>
<feature type="splice variant" id="VSP_054825" description="In isoform 2." evidence="7">
    <original>MAFRGWRPPPPPLLLLLLWVTGQAAPVAGLGSDAELQIERRFVPDECPRTVRSGDFVRYHYVGTFPDGQKFDSSYDRDSTFNVFVGKGQLITGMDQALVGMCVNERRFVKIPPKLAYGNEGVSGVIPPNSVLHFDVLLMDIWNSEDQVQIHTYFKPPSCPRTIQVSDFVRYHYNGTFLDGTLFDSSHNRMKTYDTYVGIGWLIPGMDKGLLGMCVGEKRIITIPPFLAYGEDGD</original>
    <variation>MA</variation>
    <location>
        <begin position="1"/>
        <end position="234"/>
    </location>
</feature>
<feature type="splice variant" id="VSP_054826" description="In isoform 3." evidence="7">
    <original>S</original>
    <variation>SRYWDTAEDKADKSPCPQVRVGVNTSPSCRLKQKGVGIYWKDLQFLVRVQNHGL</variation>
    <location>
        <position position="73"/>
    </location>
</feature>
<reference key="1">
    <citation type="journal article" date="2004" name="Nat. Genet.">
        <title>Complete sequencing and characterization of 21,243 full-length human cDNAs.</title>
        <authorList>
            <person name="Ota T."/>
            <person name="Suzuki Y."/>
            <person name="Nishikawa T."/>
            <person name="Otsuki T."/>
            <person name="Sugiyama T."/>
            <person name="Irie R."/>
            <person name="Wakamatsu A."/>
            <person name="Hayashi K."/>
            <person name="Sato H."/>
            <person name="Nagai K."/>
            <person name="Kimura K."/>
            <person name="Makita H."/>
            <person name="Sekine M."/>
            <person name="Obayashi M."/>
            <person name="Nishi T."/>
            <person name="Shibahara T."/>
            <person name="Tanaka T."/>
            <person name="Ishii S."/>
            <person name="Yamamoto J."/>
            <person name="Saito K."/>
            <person name="Kawai Y."/>
            <person name="Isono Y."/>
            <person name="Nakamura Y."/>
            <person name="Nagahari K."/>
            <person name="Murakami K."/>
            <person name="Yasuda T."/>
            <person name="Iwayanagi T."/>
            <person name="Wagatsuma M."/>
            <person name="Shiratori A."/>
            <person name="Sudo H."/>
            <person name="Hosoiri T."/>
            <person name="Kaku Y."/>
            <person name="Kodaira H."/>
            <person name="Kondo H."/>
            <person name="Sugawara M."/>
            <person name="Takahashi M."/>
            <person name="Kanda K."/>
            <person name="Yokoi T."/>
            <person name="Furuya T."/>
            <person name="Kikkawa E."/>
            <person name="Omura Y."/>
            <person name="Abe K."/>
            <person name="Kamihara K."/>
            <person name="Katsuta N."/>
            <person name="Sato K."/>
            <person name="Tanikawa M."/>
            <person name="Yamazaki M."/>
            <person name="Ninomiya K."/>
            <person name="Ishibashi T."/>
            <person name="Yamashita H."/>
            <person name="Murakawa K."/>
            <person name="Fujimori K."/>
            <person name="Tanai H."/>
            <person name="Kimata M."/>
            <person name="Watanabe M."/>
            <person name="Hiraoka S."/>
            <person name="Chiba Y."/>
            <person name="Ishida S."/>
            <person name="Ono Y."/>
            <person name="Takiguchi S."/>
            <person name="Watanabe S."/>
            <person name="Yosida M."/>
            <person name="Hotuta T."/>
            <person name="Kusano J."/>
            <person name="Kanehori K."/>
            <person name="Takahashi-Fujii A."/>
            <person name="Hara H."/>
            <person name="Tanase T.-O."/>
            <person name="Nomura Y."/>
            <person name="Togiya S."/>
            <person name="Komai F."/>
            <person name="Hara R."/>
            <person name="Takeuchi K."/>
            <person name="Arita M."/>
            <person name="Imose N."/>
            <person name="Musashino K."/>
            <person name="Yuuki H."/>
            <person name="Oshima A."/>
            <person name="Sasaki N."/>
            <person name="Aotsuka S."/>
            <person name="Yoshikawa Y."/>
            <person name="Matsunawa H."/>
            <person name="Ichihara T."/>
            <person name="Shiohata N."/>
            <person name="Sano S."/>
            <person name="Moriya S."/>
            <person name="Momiyama H."/>
            <person name="Satoh N."/>
            <person name="Takami S."/>
            <person name="Terashima Y."/>
            <person name="Suzuki O."/>
            <person name="Nakagawa S."/>
            <person name="Senoh A."/>
            <person name="Mizoguchi H."/>
            <person name="Goto Y."/>
            <person name="Shimizu F."/>
            <person name="Wakebe H."/>
            <person name="Hishigaki H."/>
            <person name="Watanabe T."/>
            <person name="Sugiyama A."/>
            <person name="Takemoto M."/>
            <person name="Kawakami B."/>
            <person name="Yamazaki M."/>
            <person name="Watanabe K."/>
            <person name="Kumagai A."/>
            <person name="Itakura S."/>
            <person name="Fukuzumi Y."/>
            <person name="Fujimori Y."/>
            <person name="Komiyama M."/>
            <person name="Tashiro H."/>
            <person name="Tanigami A."/>
            <person name="Fujiwara T."/>
            <person name="Ono T."/>
            <person name="Yamada K."/>
            <person name="Fujii Y."/>
            <person name="Ozaki K."/>
            <person name="Hirao M."/>
            <person name="Ohmori Y."/>
            <person name="Kawabata A."/>
            <person name="Hikiji T."/>
            <person name="Kobatake N."/>
            <person name="Inagaki H."/>
            <person name="Ikema Y."/>
            <person name="Okamoto S."/>
            <person name="Okitani R."/>
            <person name="Kawakami T."/>
            <person name="Noguchi S."/>
            <person name="Itoh T."/>
            <person name="Shigeta K."/>
            <person name="Senba T."/>
            <person name="Matsumura K."/>
            <person name="Nakajima Y."/>
            <person name="Mizuno T."/>
            <person name="Morinaga M."/>
            <person name="Sasaki M."/>
            <person name="Togashi T."/>
            <person name="Oyama M."/>
            <person name="Hata H."/>
            <person name="Watanabe M."/>
            <person name="Komatsu T."/>
            <person name="Mizushima-Sugano J."/>
            <person name="Satoh T."/>
            <person name="Shirai Y."/>
            <person name="Takahashi Y."/>
            <person name="Nakagawa K."/>
            <person name="Okumura K."/>
            <person name="Nagase T."/>
            <person name="Nomura N."/>
            <person name="Kikuchi H."/>
            <person name="Masuho Y."/>
            <person name="Yamashita R."/>
            <person name="Nakai K."/>
            <person name="Yada T."/>
            <person name="Nakamura Y."/>
            <person name="Ohara O."/>
            <person name="Isogai T."/>
            <person name="Sugano S."/>
        </authorList>
    </citation>
    <scope>NUCLEOTIDE SEQUENCE [LARGE SCALE MRNA] (ISOFORMS 1; 2 AND 3)</scope>
    <source>
        <tissue>Trachea</tissue>
    </source>
</reference>
<reference key="2">
    <citation type="journal article" date="2003" name="Nature">
        <title>The DNA sequence of human chromosome 7.</title>
        <authorList>
            <person name="Hillier L.W."/>
            <person name="Fulton R.S."/>
            <person name="Fulton L.A."/>
            <person name="Graves T.A."/>
            <person name="Pepin K.H."/>
            <person name="Wagner-McPherson C."/>
            <person name="Layman D."/>
            <person name="Maas J."/>
            <person name="Jaeger S."/>
            <person name="Walker R."/>
            <person name="Wylie K."/>
            <person name="Sekhon M."/>
            <person name="Becker M.C."/>
            <person name="O'Laughlin M.D."/>
            <person name="Schaller M.E."/>
            <person name="Fewell G.A."/>
            <person name="Delehaunty K.D."/>
            <person name="Miner T.L."/>
            <person name="Nash W.E."/>
            <person name="Cordes M."/>
            <person name="Du H."/>
            <person name="Sun H."/>
            <person name="Edwards J."/>
            <person name="Bradshaw-Cordum H."/>
            <person name="Ali J."/>
            <person name="Andrews S."/>
            <person name="Isak A."/>
            <person name="Vanbrunt A."/>
            <person name="Nguyen C."/>
            <person name="Du F."/>
            <person name="Lamar B."/>
            <person name="Courtney L."/>
            <person name="Kalicki J."/>
            <person name="Ozersky P."/>
            <person name="Bielicki L."/>
            <person name="Scott K."/>
            <person name="Holmes A."/>
            <person name="Harkins R."/>
            <person name="Harris A."/>
            <person name="Strong C.M."/>
            <person name="Hou S."/>
            <person name="Tomlinson C."/>
            <person name="Dauphin-Kohlberg S."/>
            <person name="Kozlowicz-Reilly A."/>
            <person name="Leonard S."/>
            <person name="Rohlfing T."/>
            <person name="Rock S.M."/>
            <person name="Tin-Wollam A.-M."/>
            <person name="Abbott A."/>
            <person name="Minx P."/>
            <person name="Maupin R."/>
            <person name="Strowmatt C."/>
            <person name="Latreille P."/>
            <person name="Miller N."/>
            <person name="Johnson D."/>
            <person name="Murray J."/>
            <person name="Woessner J.P."/>
            <person name="Wendl M.C."/>
            <person name="Yang S.-P."/>
            <person name="Schultz B.R."/>
            <person name="Wallis J.W."/>
            <person name="Spieth J."/>
            <person name="Bieri T.A."/>
            <person name="Nelson J.O."/>
            <person name="Berkowicz N."/>
            <person name="Wohldmann P.E."/>
            <person name="Cook L.L."/>
            <person name="Hickenbotham M.T."/>
            <person name="Eldred J."/>
            <person name="Williams D."/>
            <person name="Bedell J.A."/>
            <person name="Mardis E.R."/>
            <person name="Clifton S.W."/>
            <person name="Chissoe S.L."/>
            <person name="Marra M.A."/>
            <person name="Raymond C."/>
            <person name="Haugen E."/>
            <person name="Gillett W."/>
            <person name="Zhou Y."/>
            <person name="James R."/>
            <person name="Phelps K."/>
            <person name="Iadanoto S."/>
            <person name="Bubb K."/>
            <person name="Simms E."/>
            <person name="Levy R."/>
            <person name="Clendenning J."/>
            <person name="Kaul R."/>
            <person name="Kent W.J."/>
            <person name="Furey T.S."/>
            <person name="Baertsch R.A."/>
            <person name="Brent M.R."/>
            <person name="Keibler E."/>
            <person name="Flicek P."/>
            <person name="Bork P."/>
            <person name="Suyama M."/>
            <person name="Bailey J.A."/>
            <person name="Portnoy M.E."/>
            <person name="Torrents D."/>
            <person name="Chinwalla A.T."/>
            <person name="Gish W.R."/>
            <person name="Eddy S.R."/>
            <person name="McPherson J.D."/>
            <person name="Olson M.V."/>
            <person name="Eichler E.E."/>
            <person name="Green E.D."/>
            <person name="Waterston R.H."/>
            <person name="Wilson R.K."/>
        </authorList>
    </citation>
    <scope>NUCLEOTIDE SEQUENCE [LARGE SCALE GENOMIC DNA]</scope>
</reference>
<reference key="3">
    <citation type="journal article" date="2004" name="Genome Res.">
        <title>The status, quality, and expansion of the NIH full-length cDNA project: the Mammalian Gene Collection (MGC).</title>
        <authorList>
            <consortium name="The MGC Project Team"/>
        </authorList>
    </citation>
    <scope>NUCLEOTIDE SEQUENCE [LARGE SCALE MRNA] (ISOFORM 1)</scope>
    <source>
        <tissue>Kidney</tissue>
        <tissue>Liver</tissue>
        <tissue>Lung</tissue>
        <tissue>PNS</tissue>
    </source>
</reference>
<reference key="4">
    <citation type="journal article" date="1999" name="Biochim. Biophys. Acta">
        <title>Biochemical analysis of mouse FKBP60, a novel member of the FKBP family.</title>
        <authorList>
            <person name="Shadidy M."/>
            <person name="Caubit X."/>
            <person name="Olsen R."/>
            <person name="Seternes O.M."/>
            <person name="Moens U."/>
            <person name="Krauss S."/>
        </authorList>
    </citation>
    <scope>NUCLEOTIDE SEQUENCE [MRNA] OF 54-570 (ISOFORM 1)</scope>
</reference>
<reference key="5">
    <citation type="journal article" date="2003" name="Nat. Biotechnol.">
        <title>Identification and quantification of N-linked glycoproteins using hydrazide chemistry, stable isotope labeling and mass spectrometry.</title>
        <authorList>
            <person name="Zhang H."/>
            <person name="Li X.-J."/>
            <person name="Martin D.B."/>
            <person name="Aebersold R."/>
        </authorList>
    </citation>
    <scope>GLYCOSYLATION AT ASN-174; ASN-286 AND ASN-397</scope>
</reference>
<reference key="6">
    <citation type="journal article" date="2011" name="BMC Syst. Biol.">
        <title>Initial characterization of the human central proteome.</title>
        <authorList>
            <person name="Burkard T.R."/>
            <person name="Planyavsky M."/>
            <person name="Kaupe I."/>
            <person name="Breitwieser F.P."/>
            <person name="Buerckstuemmer T."/>
            <person name="Bennett K.L."/>
            <person name="Superti-Furga G."/>
            <person name="Colinge J."/>
        </authorList>
    </citation>
    <scope>IDENTIFICATION BY MASS SPECTROMETRY [LARGE SCALE ANALYSIS]</scope>
</reference>
<dbReference type="EC" id="5.2.1.8"/>
<dbReference type="EMBL" id="AK128597">
    <property type="protein sequence ID" value="BAG54697.1"/>
    <property type="molecule type" value="mRNA"/>
</dbReference>
<dbReference type="EMBL" id="AK293440">
    <property type="protein sequence ID" value="BAH11505.1"/>
    <property type="molecule type" value="mRNA"/>
</dbReference>
<dbReference type="EMBL" id="AK300328">
    <property type="protein sequence ID" value="BAH13259.1"/>
    <property type="molecule type" value="mRNA"/>
</dbReference>
<dbReference type="EMBL" id="AC083863">
    <property type="status" value="NOT_ANNOTATED_CDS"/>
    <property type="molecule type" value="Genomic_DNA"/>
</dbReference>
<dbReference type="EMBL" id="BC007443">
    <property type="protein sequence ID" value="AAH07443.2"/>
    <property type="molecule type" value="mRNA"/>
</dbReference>
<dbReference type="EMBL" id="BC064418">
    <property type="protein sequence ID" value="AAH64418.1"/>
    <property type="molecule type" value="mRNA"/>
</dbReference>
<dbReference type="EMBL" id="BC072422">
    <property type="protein sequence ID" value="AAH72422.1"/>
    <property type="molecule type" value="mRNA"/>
</dbReference>
<dbReference type="EMBL" id="BC101723">
    <property type="protein sequence ID" value="AAI01724.1"/>
    <property type="molecule type" value="mRNA"/>
</dbReference>
<dbReference type="EMBL" id="BC112053">
    <property type="protein sequence ID" value="AAI12054.1"/>
    <property type="molecule type" value="mRNA"/>
</dbReference>
<dbReference type="EMBL" id="AF089745">
    <property type="protein sequence ID" value="AAC78853.1"/>
    <property type="molecule type" value="mRNA"/>
</dbReference>
<dbReference type="CCDS" id="CCDS5439.1">
    <molecule id="O95302-1"/>
</dbReference>
<dbReference type="CCDS" id="CCDS64622.1">
    <molecule id="O95302-3"/>
</dbReference>
<dbReference type="CCDS" id="CCDS64623.1">
    <molecule id="O95302-2"/>
</dbReference>
<dbReference type="RefSeq" id="NP_001271270.1">
    <molecule id="O95302-3"/>
    <property type="nucleotide sequence ID" value="NM_001284341.2"/>
</dbReference>
<dbReference type="RefSeq" id="NP_001271272.1">
    <molecule id="O95302-2"/>
    <property type="nucleotide sequence ID" value="NM_001284343.2"/>
</dbReference>
<dbReference type="RefSeq" id="NP_009201.2">
    <molecule id="O95302-1"/>
    <property type="nucleotide sequence ID" value="NM_007270.4"/>
</dbReference>
<dbReference type="SMR" id="O95302"/>
<dbReference type="BioGRID" id="116456">
    <property type="interactions" value="98"/>
</dbReference>
<dbReference type="FunCoup" id="O95302">
    <property type="interactions" value="640"/>
</dbReference>
<dbReference type="IntAct" id="O95302">
    <property type="interactions" value="22"/>
</dbReference>
<dbReference type="MINT" id="O95302"/>
<dbReference type="STRING" id="9606.ENSP00000439250"/>
<dbReference type="GlyConnect" id="1598">
    <property type="glycosylation" value="8 N-Linked glycans (3 sites)"/>
</dbReference>
<dbReference type="GlyCosmos" id="O95302">
    <property type="glycosylation" value="4 sites, 9 glycans"/>
</dbReference>
<dbReference type="GlyGen" id="O95302">
    <property type="glycosylation" value="5 sites, 34 N-linked glycans (3 sites), 1 O-linked glycan (1 site)"/>
</dbReference>
<dbReference type="iPTMnet" id="O95302"/>
<dbReference type="MetOSite" id="O95302"/>
<dbReference type="PhosphoSitePlus" id="O95302"/>
<dbReference type="BioMuta" id="FKBP9"/>
<dbReference type="jPOST" id="O95302"/>
<dbReference type="MassIVE" id="O95302"/>
<dbReference type="PaxDb" id="9606-ENSP00000439250"/>
<dbReference type="PeptideAtlas" id="O95302"/>
<dbReference type="ProteomicsDB" id="50800">
    <molecule id="O95302-1"/>
</dbReference>
<dbReference type="ProteomicsDB" id="6329"/>
<dbReference type="ProteomicsDB" id="6778"/>
<dbReference type="Pumba" id="O95302"/>
<dbReference type="Antibodypedia" id="2851">
    <property type="antibodies" value="79 antibodies from 23 providers"/>
</dbReference>
<dbReference type="DNASU" id="11328"/>
<dbReference type="Ensembl" id="ENST00000242209.9">
    <molecule id="O95302-1"/>
    <property type="protein sequence ID" value="ENSP00000242209.4"/>
    <property type="gene ID" value="ENSG00000122642.11"/>
</dbReference>
<dbReference type="Ensembl" id="ENST00000490776.3">
    <molecule id="O95302-2"/>
    <property type="protein sequence ID" value="ENSP00000441317.1"/>
    <property type="gene ID" value="ENSG00000122642.11"/>
</dbReference>
<dbReference type="Ensembl" id="ENST00000538336.5">
    <molecule id="O95302-3"/>
    <property type="protein sequence ID" value="ENSP00000439250.1"/>
    <property type="gene ID" value="ENSG00000122642.11"/>
</dbReference>
<dbReference type="GeneID" id="11328"/>
<dbReference type="KEGG" id="hsa:11328"/>
<dbReference type="MANE-Select" id="ENST00000242209.9">
    <property type="protein sequence ID" value="ENSP00000242209.4"/>
    <property type="RefSeq nucleotide sequence ID" value="NM_007270.5"/>
    <property type="RefSeq protein sequence ID" value="NP_009201.2"/>
</dbReference>
<dbReference type="UCSC" id="uc003tdh.5">
    <molecule id="O95302-1"/>
    <property type="organism name" value="human"/>
</dbReference>
<dbReference type="AGR" id="HGNC:3725"/>
<dbReference type="CTD" id="11328"/>
<dbReference type="DisGeNET" id="11328"/>
<dbReference type="GeneCards" id="FKBP9"/>
<dbReference type="HGNC" id="HGNC:3725">
    <property type="gene designation" value="FKBP9"/>
</dbReference>
<dbReference type="HPA" id="ENSG00000122642">
    <property type="expression patterns" value="Low tissue specificity"/>
</dbReference>
<dbReference type="MIM" id="616257">
    <property type="type" value="gene"/>
</dbReference>
<dbReference type="neXtProt" id="NX_O95302"/>
<dbReference type="OpenTargets" id="ENSG00000122642"/>
<dbReference type="PharmGKB" id="PA28166"/>
<dbReference type="VEuPathDB" id="HostDB:ENSG00000122642"/>
<dbReference type="eggNOG" id="KOG0549">
    <property type="taxonomic scope" value="Eukaryota"/>
</dbReference>
<dbReference type="GeneTree" id="ENSGT00940000157125"/>
<dbReference type="HOGENOM" id="CLU_034907_0_0_1"/>
<dbReference type="InParanoid" id="O95302"/>
<dbReference type="OMA" id="TVTYKPE"/>
<dbReference type="OrthoDB" id="1902587at2759"/>
<dbReference type="PAN-GO" id="O95302">
    <property type="GO annotations" value="3 GO annotations based on evolutionary models"/>
</dbReference>
<dbReference type="PhylomeDB" id="O95302"/>
<dbReference type="TreeFam" id="TF105296"/>
<dbReference type="PathwayCommons" id="O95302"/>
<dbReference type="Reactome" id="R-HSA-390471">
    <property type="pathway name" value="Association of TriC/CCT with target proteins during biosynthesis"/>
</dbReference>
<dbReference type="SignaLink" id="O95302"/>
<dbReference type="BioGRID-ORCS" id="11328">
    <property type="hits" value="16 hits in 1149 CRISPR screens"/>
</dbReference>
<dbReference type="ChiTaRS" id="FKBP9">
    <property type="organism name" value="human"/>
</dbReference>
<dbReference type="GeneWiki" id="FKBP9"/>
<dbReference type="GenomeRNAi" id="11328"/>
<dbReference type="Pharos" id="O95302">
    <property type="development level" value="Tbio"/>
</dbReference>
<dbReference type="PRO" id="PR:O95302"/>
<dbReference type="Proteomes" id="UP000005640">
    <property type="component" value="Chromosome 7"/>
</dbReference>
<dbReference type="RNAct" id="O95302">
    <property type="molecule type" value="protein"/>
</dbReference>
<dbReference type="Bgee" id="ENSG00000122642">
    <property type="expression patterns" value="Expressed in stromal cell of endometrium and 106 other cell types or tissues"/>
</dbReference>
<dbReference type="ExpressionAtlas" id="O95302">
    <property type="expression patterns" value="baseline and differential"/>
</dbReference>
<dbReference type="GO" id="GO:0005783">
    <property type="term" value="C:endoplasmic reticulum"/>
    <property type="evidence" value="ECO:0000250"/>
    <property type="project" value="UniProtKB"/>
</dbReference>
<dbReference type="GO" id="GO:0005509">
    <property type="term" value="F:calcium ion binding"/>
    <property type="evidence" value="ECO:0000250"/>
    <property type="project" value="UniProtKB"/>
</dbReference>
<dbReference type="GO" id="GO:0003755">
    <property type="term" value="F:peptidyl-prolyl cis-trans isomerase activity"/>
    <property type="evidence" value="ECO:0000318"/>
    <property type="project" value="GO_Central"/>
</dbReference>
<dbReference type="GO" id="GO:0006457">
    <property type="term" value="P:protein folding"/>
    <property type="evidence" value="ECO:0000250"/>
    <property type="project" value="UniProtKB"/>
</dbReference>
<dbReference type="CDD" id="cd00051">
    <property type="entry name" value="EFh"/>
    <property type="match status" value="1"/>
</dbReference>
<dbReference type="FunFam" id="1.10.238.10:FF:000102">
    <property type="entry name" value="Peptidylprolyl isomerase"/>
    <property type="match status" value="1"/>
</dbReference>
<dbReference type="FunFam" id="3.10.50.40:FF:000002">
    <property type="entry name" value="Peptidylprolyl isomerase"/>
    <property type="match status" value="4"/>
</dbReference>
<dbReference type="Gene3D" id="3.10.50.40">
    <property type="match status" value="4"/>
</dbReference>
<dbReference type="Gene3D" id="1.10.238.10">
    <property type="entry name" value="EF-hand"/>
    <property type="match status" value="1"/>
</dbReference>
<dbReference type="InterPro" id="IPR011992">
    <property type="entry name" value="EF-hand-dom_pair"/>
</dbReference>
<dbReference type="InterPro" id="IPR018247">
    <property type="entry name" value="EF_Hand_1_Ca_BS"/>
</dbReference>
<dbReference type="InterPro" id="IPR002048">
    <property type="entry name" value="EF_hand_dom"/>
</dbReference>
<dbReference type="InterPro" id="IPR051989">
    <property type="entry name" value="FKBP-like_isomerase"/>
</dbReference>
<dbReference type="InterPro" id="IPR046357">
    <property type="entry name" value="PPIase_dom_sf"/>
</dbReference>
<dbReference type="InterPro" id="IPR001179">
    <property type="entry name" value="PPIase_FKBP_dom"/>
</dbReference>
<dbReference type="PANTHER" id="PTHR46046:SF2">
    <property type="entry name" value="PEPTIDYL-PROLYL CIS-TRANS ISOMERASE FKBP9"/>
    <property type="match status" value="1"/>
</dbReference>
<dbReference type="PANTHER" id="PTHR46046">
    <property type="entry name" value="PEPTIDYLPROLYL ISOMERASE"/>
    <property type="match status" value="1"/>
</dbReference>
<dbReference type="Pfam" id="PF00254">
    <property type="entry name" value="FKBP_C"/>
    <property type="match status" value="4"/>
</dbReference>
<dbReference type="SMART" id="SM00054">
    <property type="entry name" value="EFh"/>
    <property type="match status" value="2"/>
</dbReference>
<dbReference type="SUPFAM" id="SSF47473">
    <property type="entry name" value="EF-hand"/>
    <property type="match status" value="1"/>
</dbReference>
<dbReference type="SUPFAM" id="SSF54534">
    <property type="entry name" value="FKBP-like"/>
    <property type="match status" value="4"/>
</dbReference>
<dbReference type="PROSITE" id="PS00018">
    <property type="entry name" value="EF_HAND_1"/>
    <property type="match status" value="1"/>
</dbReference>
<dbReference type="PROSITE" id="PS50222">
    <property type="entry name" value="EF_HAND_2"/>
    <property type="match status" value="2"/>
</dbReference>
<dbReference type="PROSITE" id="PS00014">
    <property type="entry name" value="ER_TARGET"/>
    <property type="match status" value="1"/>
</dbReference>
<dbReference type="PROSITE" id="PS50059">
    <property type="entry name" value="FKBP_PPIASE"/>
    <property type="match status" value="4"/>
</dbReference>